<feature type="signal peptide" evidence="4">
    <location>
        <begin position="1"/>
        <end position="31"/>
    </location>
</feature>
<feature type="chain" id="PRO_0000011547" description="Glutamate receptor ionotropic, kainate 3">
    <location>
        <begin position="32"/>
        <end position="919"/>
    </location>
</feature>
<feature type="topological domain" description="Extracellular" evidence="4">
    <location>
        <begin position="32"/>
        <end position="563"/>
    </location>
</feature>
<feature type="transmembrane region" description="Helical" evidence="4">
    <location>
        <begin position="564"/>
        <end position="584"/>
    </location>
</feature>
<feature type="topological domain" description="Cytoplasmic" evidence="4">
    <location>
        <begin position="585"/>
        <end position="636"/>
    </location>
</feature>
<feature type="transmembrane region" description="Helical" evidence="4">
    <location>
        <begin position="637"/>
        <end position="657"/>
    </location>
</feature>
<feature type="topological domain" description="Extracellular" evidence="4">
    <location>
        <begin position="658"/>
        <end position="820"/>
    </location>
</feature>
<feature type="transmembrane region" description="Helical" evidence="4">
    <location>
        <begin position="821"/>
        <end position="841"/>
    </location>
</feature>
<feature type="topological domain" description="Cytoplasmic" evidence="4">
    <location>
        <begin position="842"/>
        <end position="919"/>
    </location>
</feature>
<feature type="binding site" evidence="2">
    <location>
        <position position="518"/>
    </location>
    <ligand>
        <name>L-glutamate</name>
        <dbReference type="ChEBI" id="CHEBI:29985"/>
    </ligand>
</feature>
<feature type="binding site" evidence="2">
    <location>
        <position position="520"/>
    </location>
    <ligand>
        <name>L-glutamate</name>
        <dbReference type="ChEBI" id="CHEBI:29985"/>
    </ligand>
</feature>
<feature type="binding site" evidence="2">
    <location>
        <position position="525"/>
    </location>
    <ligand>
        <name>L-glutamate</name>
        <dbReference type="ChEBI" id="CHEBI:29985"/>
    </ligand>
</feature>
<feature type="binding site" evidence="2">
    <location>
        <position position="691"/>
    </location>
    <ligand>
        <name>L-glutamate</name>
        <dbReference type="ChEBI" id="CHEBI:29985"/>
    </ligand>
</feature>
<feature type="binding site" evidence="2">
    <location>
        <position position="692"/>
    </location>
    <ligand>
        <name>L-glutamate</name>
        <dbReference type="ChEBI" id="CHEBI:29985"/>
    </ligand>
</feature>
<feature type="binding site" evidence="2">
    <location>
        <position position="739"/>
    </location>
    <ligand>
        <name>L-glutamate</name>
        <dbReference type="ChEBI" id="CHEBI:29985"/>
    </ligand>
</feature>
<feature type="modified residue" description="Phosphoserine" evidence="3">
    <location>
        <position position="869"/>
    </location>
</feature>
<feature type="glycosylation site" description="N-linked (GlcNAc...) asparagine" evidence="4">
    <location>
        <position position="70"/>
    </location>
</feature>
<feature type="glycosylation site" description="N-linked (GlcNAc...) asparagine" evidence="4">
    <location>
        <position position="76"/>
    </location>
</feature>
<feature type="glycosylation site" description="N-linked (GlcNAc...) asparagine" evidence="4">
    <location>
        <position position="278"/>
    </location>
</feature>
<feature type="glycosylation site" description="N-linked (GlcNAc...) asparagine" evidence="4">
    <location>
        <position position="381"/>
    </location>
</feature>
<feature type="glycosylation site" description="N-linked (GlcNAc...) asparagine" evidence="4">
    <location>
        <position position="415"/>
    </location>
</feature>
<feature type="glycosylation site" description="N-linked (GlcNAc...) asparagine" evidence="4">
    <location>
        <position position="426"/>
    </location>
</feature>
<feature type="glycosylation site" description="N-linked (GlcNAc...) asparagine" evidence="4">
    <location>
        <position position="433"/>
    </location>
</feature>
<feature type="glycosylation site" description="N-linked (GlcNAc...) asparagine" evidence="4">
    <location>
        <position position="548"/>
    </location>
</feature>
<feature type="glycosylation site" description="N-linked (GlcNAc...) asparagine" evidence="4">
    <location>
        <position position="551"/>
    </location>
</feature>
<feature type="glycosylation site" description="N-linked (GlcNAc...) asparagine" evidence="4">
    <location>
        <position position="752"/>
    </location>
</feature>
<feature type="disulfide bond" evidence="2">
    <location>
        <begin position="99"/>
        <end position="350"/>
    </location>
</feature>
<feature type="cross-link" description="Glycyl lysine isopeptide (Lys-Gly) (interchain with G-Cter in SUMO1)" evidence="3">
    <location>
        <position position="887"/>
    </location>
</feature>
<feature type="splice variant" id="VSP_056588" description="In isoform 2." evidence="8">
    <original>RSFCSTVADEIRFSLTCQRRVKHKPQPPMMVKTDAVINMHTFNDRRLPGKDSMACSTSLAPVFP</original>
    <variation>VSLRAWSLHRMGNGDSR</variation>
    <location>
        <begin position="856"/>
        <end position="919"/>
    </location>
</feature>
<feature type="sequence variant" id="VAR_035695" description="In a colorectal cancer sample; somatic mutation; dbSNP:rs755366301." evidence="6">
    <original>R</original>
    <variation>H</variation>
    <location>
        <position position="215"/>
    </location>
</feature>
<feature type="sequence variant" id="VAR_000308" description="In dbSNP:rs6691840." evidence="5 7">
    <original>S</original>
    <variation>A</variation>
    <location>
        <position position="310"/>
    </location>
</feature>
<feature type="sequence variant" id="VAR_000309" description="In RNA edited version.">
    <original>R</original>
    <variation>Q</variation>
    <location>
        <position position="352"/>
    </location>
</feature>
<feature type="sequence variant" id="VAR_035696" description="In a breast cancer sample; somatic mutation; dbSNP:rs750720363." evidence="6">
    <original>D</original>
    <variation>H</variation>
    <location>
        <position position="391"/>
    </location>
</feature>
<feature type="sequence conflict" description="In Ref. 3; AAB30157." evidence="9" ref="3">
    <original>R</original>
    <variation>L</variation>
    <location>
        <position position="303"/>
    </location>
</feature>
<feature type="sequence conflict" description="In Ref. 1; AAB60407." evidence="9" ref="1">
    <original>E</original>
    <variation>V</variation>
    <location>
        <position position="627"/>
    </location>
</feature>
<feature type="sequence conflict" description="In Ref. 1; AAB60407." evidence="9" ref="1">
    <original>S</original>
    <variation>R</variation>
    <location>
        <position position="713"/>
    </location>
</feature>
<keyword id="KW-0025">Alternative splicing</keyword>
<keyword id="KW-1003">Cell membrane</keyword>
<keyword id="KW-1015">Disulfide bond</keyword>
<keyword id="KW-0325">Glycoprotein</keyword>
<keyword id="KW-0407">Ion channel</keyword>
<keyword id="KW-0406">Ion transport</keyword>
<keyword id="KW-1017">Isopeptide bond</keyword>
<keyword id="KW-1071">Ligand-gated ion channel</keyword>
<keyword id="KW-0472">Membrane</keyword>
<keyword id="KW-0597">Phosphoprotein</keyword>
<keyword id="KW-0628">Postsynaptic cell membrane</keyword>
<keyword id="KW-1267">Proteomics identification</keyword>
<keyword id="KW-0675">Receptor</keyword>
<keyword id="KW-1185">Reference proteome</keyword>
<keyword id="KW-0691">RNA editing</keyword>
<keyword id="KW-0732">Signal</keyword>
<keyword id="KW-0770">Synapse</keyword>
<keyword id="KW-0812">Transmembrane</keyword>
<keyword id="KW-1133">Transmembrane helix</keyword>
<keyword id="KW-0813">Transport</keyword>
<keyword id="KW-0832">Ubl conjugation</keyword>
<sequence length="919" mass="104037">MTAPWRRLRSLVWEYWAGLLVCAFWIPDSRGMPHVIRIGGIFEYADGPNAQVMNAEEHAFRFSANIINRNRTLLPNTTLTYDIQRIHFHDSFEATKKACDQLALGVVAIFGPSQGSCTNAVQSICNALEVPHIQLRWKHHPLDNKDTFYVNLYPDYASLSHAILDLVQYLKWRSATVVYDDSTGLIRLQELIMAPSRYNIRLKIRQLPIDSDDSRPLLKEMKRGREFRIIFDCSHTMAAQILKQAMAMGMMTEYYHFIFTTLDLYALDLEPYRYSGVNLTGFRILNVDNPHVSAIVEKWSMERLQAAPRSESGLLDGVMMTDAALLYDAVHIVSVCYQRAPQMTVNSLQCHRHKAWRFGGRFMNFIKEAQWEGLTGRIVFNKTSGLRTDFDLDIISLKEDGLEKVGVWSPADGLNITEVAKGRGPNVTDSLTNRSLIVTTVLEEPFVMFRKSDRTLYGNDRFEGYCIDLLKELAHILGFSYEIRLVEDGKYGAQDDKGQWNGMVKELIDHKADLAVAPLTITHVREKAIDFSKPFMTLGVSILYRKPNGTNPSVFSFLNPLSPDIWMYVLLAYLGVSCVLFVIARFSPYEWYDAHPCNPGSEVVENNFTLLNSFWFGMGSLMQQGSELMPKALSTRIIGGIWWFFTLIIISSYTANLAAFLTVERMESPIDSADDLAKQTKIEYGAVKDGATMTFFKKSKISTFEKMWAFMSSKPSALVKNNEEGIQRALTADYALLMESTTIEYVTQRNCNLTQIGGLIDSKGYGIGTPMGSPYRDKITIAILQLQEEDKLHIMKEKWWRGSGCPEEENKEASALGIQKIGGIFIVLAAGLVLSVLVAVGEFVYKLRKTAEREQRSFCSTVADEIRFSLTCQRRVKHKPQPPMMVKTDAVINMHTFNDRRLPGKDSMACSTSLAPVFP</sequence>
<accession>Q13003</accession>
<accession>A9Z1Z8</accession>
<accession>B1AMS6</accession>
<accession>Q13004</accession>
<accession>Q16136</accession>
<organism>
    <name type="scientific">Homo sapiens</name>
    <name type="common">Human</name>
    <dbReference type="NCBI Taxonomy" id="9606"/>
    <lineage>
        <taxon>Eukaryota</taxon>
        <taxon>Metazoa</taxon>
        <taxon>Chordata</taxon>
        <taxon>Craniata</taxon>
        <taxon>Vertebrata</taxon>
        <taxon>Euteleostomi</taxon>
        <taxon>Mammalia</taxon>
        <taxon>Eutheria</taxon>
        <taxon>Euarchontoglires</taxon>
        <taxon>Primates</taxon>
        <taxon>Haplorrhini</taxon>
        <taxon>Catarrhini</taxon>
        <taxon>Hominidae</taxon>
        <taxon>Homo</taxon>
    </lineage>
</organism>
<gene>
    <name type="primary">GRIK3</name>
    <name type="synonym">GLUR7</name>
</gene>
<evidence type="ECO:0000250" key="1">
    <source>
        <dbReference type="UniProtKB" id="B1AS29"/>
    </source>
</evidence>
<evidence type="ECO:0000250" key="2">
    <source>
        <dbReference type="UniProtKB" id="P42264"/>
    </source>
</evidence>
<evidence type="ECO:0000250" key="3">
    <source>
        <dbReference type="UniProtKB" id="Q13002"/>
    </source>
</evidence>
<evidence type="ECO:0000255" key="4"/>
<evidence type="ECO:0000269" key="5">
    <source>
    </source>
</evidence>
<evidence type="ECO:0000269" key="6">
    <source>
    </source>
</evidence>
<evidence type="ECO:0000269" key="7">
    <source>
    </source>
</evidence>
<evidence type="ECO:0000303" key="8">
    <source ref="2"/>
</evidence>
<evidence type="ECO:0000305" key="9"/>
<name>GRIK3_HUMAN</name>
<comment type="function">
    <text evidence="1 7">Ionotropic glutamate receptor that functions as a cation-permeable ligand-gated ion channel, gated by L-glutamate and the glutamatergic agonist kainic acid. Binding of the excitatory neurotransmitter L-glutamate induces a conformation change, leading to the opening of the cation channel, and thereby converts the chemical signal to an electrical impulse. The receptor then desensitizes rapidly and enters a transient inactive state, characterized by the presence of bound agonist (PubMed:7719709). In association with GRIK2, involved in presynaptic facilitation of glutamate release at hippocampal mossy fiber synapses (By similarity).</text>
</comment>
<comment type="catalytic activity">
    <reaction evidence="1">
        <text>Ca(2+)(in) = Ca(2+)(out)</text>
        <dbReference type="Rhea" id="RHEA:29671"/>
        <dbReference type="ChEBI" id="CHEBI:29108"/>
    </reaction>
</comment>
<comment type="subunit">
    <text evidence="1 2">Homotetramer, and heterotetramer with either GRIK4 or GRIK5. Can form functional heteromeric receptors with GRIK2. Interacts with PRKCABP. Interacts with NETO2.</text>
</comment>
<comment type="subcellular location">
    <subcellularLocation>
        <location evidence="2">Cell membrane</location>
        <topology evidence="4">Multi-pass membrane protein</topology>
    </subcellularLocation>
    <subcellularLocation>
        <location evidence="2">Postsynaptic cell membrane</location>
        <topology evidence="4">Multi-pass membrane protein</topology>
    </subcellularLocation>
</comment>
<comment type="alternative products">
    <event type="alternative splicing"/>
    <isoform>
        <id>Q13003-1</id>
        <name>1</name>
        <sequence type="displayed"/>
    </isoform>
    <isoform>
        <id>Q13003-2</id>
        <name>2</name>
        <sequence type="described" ref="VSP_056588"/>
    </isoform>
</comment>
<comment type="RNA editing">
    <location>
        <position position="352" evidence="7"/>
    </location>
    <text>Partially edited.</text>
</comment>
<comment type="miscellaneous">
    <text evidence="2">The postsynaptic actions of Glu are mediated by a variety of receptors that are named according to their selective agonists. This receptor binds domoate &gt; kainate &gt;&gt; L-glutamate = quisqualate &gt;&gt; AMPA = NMDA.</text>
</comment>
<comment type="similarity">
    <text evidence="9">Belongs to the glutamate-gated ion channel (TC 1.A.10.1) family. GRIK3 subfamily.</text>
</comment>
<protein>
    <recommendedName>
        <fullName>Glutamate receptor ionotropic, kainate 3</fullName>
        <shortName>GluK3</shortName>
    </recommendedName>
    <alternativeName>
        <fullName>Excitatory amino acid receptor 5</fullName>
        <shortName>EAA5</shortName>
    </alternativeName>
    <alternativeName>
        <fullName>Glutamate receptor 7</fullName>
        <shortName>GluR-7</shortName>
        <shortName>GluR7</shortName>
    </alternativeName>
</protein>
<dbReference type="EMBL" id="U16127">
    <property type="protein sequence ID" value="AAB60407.1"/>
    <property type="molecule type" value="mRNA"/>
</dbReference>
<dbReference type="EMBL" id="U16128">
    <property type="protein sequence ID" value="AAC50421.1"/>
    <property type="molecule type" value="Genomic_DNA"/>
</dbReference>
<dbReference type="EMBL" id="AJ249210">
    <property type="protein sequence ID" value="CAC80548.1"/>
    <property type="molecule type" value="mRNA"/>
</dbReference>
<dbReference type="EMBL" id="AC117945">
    <property type="status" value="NOT_ANNOTATED_CDS"/>
    <property type="molecule type" value="Genomic_DNA"/>
</dbReference>
<dbReference type="EMBL" id="AL355386">
    <property type="status" value="NOT_ANNOTATED_CDS"/>
    <property type="molecule type" value="Genomic_DNA"/>
</dbReference>
<dbReference type="EMBL" id="AL591883">
    <property type="status" value="NOT_ANNOTATED_CDS"/>
    <property type="molecule type" value="Genomic_DNA"/>
</dbReference>
<dbReference type="EMBL" id="CH471059">
    <property type="protein sequence ID" value="EAX07350.1"/>
    <property type="molecule type" value="Genomic_DNA"/>
</dbReference>
<dbReference type="EMBL" id="CH471059">
    <property type="protein sequence ID" value="EAX07351.1"/>
    <property type="molecule type" value="Genomic_DNA"/>
</dbReference>
<dbReference type="EMBL" id="S69349">
    <property type="protein sequence ID" value="AAB30157.1"/>
    <property type="molecule type" value="Genomic_DNA"/>
</dbReference>
<dbReference type="CCDS" id="CCDS416.1">
    <molecule id="Q13003-1"/>
</dbReference>
<dbReference type="PIR" id="I59604">
    <property type="entry name" value="I59604"/>
</dbReference>
<dbReference type="RefSeq" id="NP_000822.2">
    <molecule id="Q13003-1"/>
    <property type="nucleotide sequence ID" value="NM_000831.3"/>
</dbReference>
<dbReference type="EMDB" id="EMD-15985"/>
<dbReference type="EMDB" id="EMD-15986"/>
<dbReference type="SMR" id="Q13003"/>
<dbReference type="BioGRID" id="109156">
    <property type="interactions" value="6"/>
</dbReference>
<dbReference type="ComplexPortal" id="CPX-8521">
    <property type="entry name" value="GLUK3-GLUK5 glutamate ionotropic kainate-type receptor complex"/>
</dbReference>
<dbReference type="ComplexPortal" id="CPX-8524">
    <property type="entry name" value="GLUK3 glutamate ionotropic kainate-type receptor complex"/>
</dbReference>
<dbReference type="ComplexPortal" id="CPX-8550">
    <property type="entry name" value="GLUK1-GLUK3 glutamate ionotropic kainate-type receptor complex"/>
</dbReference>
<dbReference type="ComplexPortal" id="CPX-8553">
    <property type="entry name" value="GLUK2-GLUK3 glutamate ionotropic kainate-type receptor complex"/>
</dbReference>
<dbReference type="ComplexPortal" id="CPX-8555">
    <property type="entry name" value="GLUK1-GLUK3-GLUK5 glutamate ionotropic kainate-type receptor complex"/>
</dbReference>
<dbReference type="ComplexPortal" id="CPX-8556">
    <property type="entry name" value="GLUK1-GLUK2-GLUK3-GLUK5 glutamate ionotropic kainate-type receptor complex"/>
</dbReference>
<dbReference type="ComplexPortal" id="CPX-8631">
    <property type="entry name" value="GLUK3-GLUK4 glutamate ionotropic kainate-type receptor complex"/>
</dbReference>
<dbReference type="ComplexPortal" id="CPX-8633">
    <property type="entry name" value="GLUK1-GLUK3-GLUK4 glutamate ionotropic kainate-type receptor complex"/>
</dbReference>
<dbReference type="ComplexPortal" id="CPX-8634">
    <property type="entry name" value="GLUK1-GLUK2-GLUK3-GLUK4 glutamate ionotropic kainate-type receptor complex"/>
</dbReference>
<dbReference type="CORUM" id="Q13003"/>
<dbReference type="FunCoup" id="Q13003">
    <property type="interactions" value="657"/>
</dbReference>
<dbReference type="IntAct" id="Q13003">
    <property type="interactions" value="1"/>
</dbReference>
<dbReference type="STRING" id="9606.ENSP00000362183"/>
<dbReference type="BindingDB" id="Q13003"/>
<dbReference type="ChEMBL" id="CHEMBL3684"/>
<dbReference type="DrugBank" id="DB00237">
    <property type="generic name" value="Butabarbital"/>
</dbReference>
<dbReference type="DrugBank" id="DB00142">
    <property type="generic name" value="Glutamic acid"/>
</dbReference>
<dbReference type="DrugBank" id="DB00273">
    <property type="generic name" value="Topiramate"/>
</dbReference>
<dbReference type="DrugCentral" id="Q13003"/>
<dbReference type="GuidetoPHARMACOLOGY" id="452"/>
<dbReference type="GlyCosmos" id="Q13003">
    <property type="glycosylation" value="10 sites, No reported glycans"/>
</dbReference>
<dbReference type="GlyGen" id="Q13003">
    <property type="glycosylation" value="10 sites"/>
</dbReference>
<dbReference type="iPTMnet" id="Q13003"/>
<dbReference type="PhosphoSitePlus" id="Q13003"/>
<dbReference type="BioMuta" id="GRIK3"/>
<dbReference type="DMDM" id="212276502"/>
<dbReference type="jPOST" id="Q13003"/>
<dbReference type="MassIVE" id="Q13003"/>
<dbReference type="PaxDb" id="9606-ENSP00000362183"/>
<dbReference type="PeptideAtlas" id="Q13003"/>
<dbReference type="ProteomicsDB" id="2530"/>
<dbReference type="ProteomicsDB" id="59094">
    <molecule id="Q13003-1"/>
</dbReference>
<dbReference type="Antibodypedia" id="3095">
    <property type="antibodies" value="189 antibodies from 27 providers"/>
</dbReference>
<dbReference type="DNASU" id="2899"/>
<dbReference type="Ensembl" id="ENST00000373091.8">
    <molecule id="Q13003-1"/>
    <property type="protein sequence ID" value="ENSP00000362183.3"/>
    <property type="gene ID" value="ENSG00000163873.10"/>
</dbReference>
<dbReference type="Ensembl" id="ENST00000373093.4">
    <molecule id="Q13003-2"/>
    <property type="protein sequence ID" value="ENSP00000362185.4"/>
    <property type="gene ID" value="ENSG00000163873.10"/>
</dbReference>
<dbReference type="GeneID" id="2899"/>
<dbReference type="KEGG" id="hsa:2899"/>
<dbReference type="MANE-Select" id="ENST00000373091.8">
    <property type="protein sequence ID" value="ENSP00000362183.3"/>
    <property type="RefSeq nucleotide sequence ID" value="NM_000831.4"/>
    <property type="RefSeq protein sequence ID" value="NP_000822.2"/>
</dbReference>
<dbReference type="UCSC" id="uc001caz.3">
    <molecule id="Q13003-1"/>
    <property type="organism name" value="human"/>
</dbReference>
<dbReference type="AGR" id="HGNC:4581"/>
<dbReference type="CTD" id="2899"/>
<dbReference type="DisGeNET" id="2899"/>
<dbReference type="GeneCards" id="GRIK3"/>
<dbReference type="HGNC" id="HGNC:4581">
    <property type="gene designation" value="GRIK3"/>
</dbReference>
<dbReference type="HPA" id="ENSG00000163873">
    <property type="expression patterns" value="Tissue enhanced (brain, intestine, pituitary gland)"/>
</dbReference>
<dbReference type="MalaCards" id="GRIK3"/>
<dbReference type="MIM" id="138243">
    <property type="type" value="gene"/>
</dbReference>
<dbReference type="neXtProt" id="NX_Q13003"/>
<dbReference type="OpenTargets" id="ENSG00000163873"/>
<dbReference type="PharmGKB" id="PA28975"/>
<dbReference type="VEuPathDB" id="HostDB:ENSG00000163873"/>
<dbReference type="eggNOG" id="KOG1052">
    <property type="taxonomic scope" value="Eukaryota"/>
</dbReference>
<dbReference type="GeneTree" id="ENSGT00940000159465"/>
<dbReference type="HOGENOM" id="CLU_007257_1_1_1"/>
<dbReference type="InParanoid" id="Q13003"/>
<dbReference type="OMA" id="SMTCLGD"/>
<dbReference type="OrthoDB" id="5984008at2759"/>
<dbReference type="PAN-GO" id="Q13003">
    <property type="GO annotations" value="8 GO annotations based on evolutionary models"/>
</dbReference>
<dbReference type="PhylomeDB" id="Q13003"/>
<dbReference type="TreeFam" id="TF334668"/>
<dbReference type="PathwayCommons" id="Q13003"/>
<dbReference type="Reactome" id="R-HSA-451308">
    <property type="pathway name" value="Activation of Ca-permeable Kainate Receptor"/>
</dbReference>
<dbReference type="Reactome" id="R-HSA-500657">
    <property type="pathway name" value="Presynaptic function of Kainate receptors"/>
</dbReference>
<dbReference type="SignaLink" id="Q13003"/>
<dbReference type="SIGNOR" id="Q13003"/>
<dbReference type="BioGRID-ORCS" id="2899">
    <property type="hits" value="15 hits in 1153 CRISPR screens"/>
</dbReference>
<dbReference type="ChiTaRS" id="GRIK3">
    <property type="organism name" value="human"/>
</dbReference>
<dbReference type="GeneWiki" id="GRIK3"/>
<dbReference type="GenomeRNAi" id="2899"/>
<dbReference type="Pharos" id="Q13003">
    <property type="development level" value="Tclin"/>
</dbReference>
<dbReference type="PRO" id="PR:Q13003"/>
<dbReference type="Proteomes" id="UP000005640">
    <property type="component" value="Chromosome 1"/>
</dbReference>
<dbReference type="RNAct" id="Q13003">
    <property type="molecule type" value="protein"/>
</dbReference>
<dbReference type="Bgee" id="ENSG00000163873">
    <property type="expression patterns" value="Expressed in cortical plate and 120 other cell types or tissues"/>
</dbReference>
<dbReference type="GO" id="GO:0030424">
    <property type="term" value="C:axon"/>
    <property type="evidence" value="ECO:0000250"/>
    <property type="project" value="UniProtKB"/>
</dbReference>
<dbReference type="GO" id="GO:0030425">
    <property type="term" value="C:dendrite"/>
    <property type="evidence" value="ECO:0000250"/>
    <property type="project" value="UniProtKB"/>
</dbReference>
<dbReference type="GO" id="GO:0032839">
    <property type="term" value="C:dendrite cytoplasm"/>
    <property type="evidence" value="ECO:0000250"/>
    <property type="project" value="UniProtKB"/>
</dbReference>
<dbReference type="GO" id="GO:0098978">
    <property type="term" value="C:glutamatergic synapse"/>
    <property type="evidence" value="ECO:0007669"/>
    <property type="project" value="Ensembl"/>
</dbReference>
<dbReference type="GO" id="GO:0032983">
    <property type="term" value="C:kainate selective glutamate receptor complex"/>
    <property type="evidence" value="ECO:0000318"/>
    <property type="project" value="GO_Central"/>
</dbReference>
<dbReference type="GO" id="GO:0043204">
    <property type="term" value="C:perikaryon"/>
    <property type="evidence" value="ECO:0000250"/>
    <property type="project" value="UniProtKB"/>
</dbReference>
<dbReference type="GO" id="GO:0005886">
    <property type="term" value="C:plasma membrane"/>
    <property type="evidence" value="ECO:0000314"/>
    <property type="project" value="UniProtKB"/>
</dbReference>
<dbReference type="GO" id="GO:0098839">
    <property type="term" value="C:postsynaptic density membrane"/>
    <property type="evidence" value="ECO:0000318"/>
    <property type="project" value="GO_Central"/>
</dbReference>
<dbReference type="GO" id="GO:0042734">
    <property type="term" value="C:presynaptic membrane"/>
    <property type="evidence" value="ECO:0000318"/>
    <property type="project" value="GO_Central"/>
</dbReference>
<dbReference type="GO" id="GO:0043195">
    <property type="term" value="C:terminal bouton"/>
    <property type="evidence" value="ECO:0000250"/>
    <property type="project" value="UniProtKB"/>
</dbReference>
<dbReference type="GO" id="GO:0001640">
    <property type="term" value="F:adenylate cyclase inhibiting G protein-coupled glutamate receptor activity"/>
    <property type="evidence" value="ECO:0000314"/>
    <property type="project" value="UniProtKB"/>
</dbReference>
<dbReference type="GO" id="GO:0008066">
    <property type="term" value="F:glutamate receptor activity"/>
    <property type="evidence" value="ECO:0000304"/>
    <property type="project" value="UniProtKB"/>
</dbReference>
<dbReference type="GO" id="GO:0022849">
    <property type="term" value="F:glutamate-gated calcium ion channel activity"/>
    <property type="evidence" value="ECO:0007669"/>
    <property type="project" value="Ensembl"/>
</dbReference>
<dbReference type="GO" id="GO:0004970">
    <property type="term" value="F:glutamate-gated receptor activity"/>
    <property type="evidence" value="ECO:0000314"/>
    <property type="project" value="MGI"/>
</dbReference>
<dbReference type="GO" id="GO:0015277">
    <property type="term" value="F:kainate selective glutamate receptor activity"/>
    <property type="evidence" value="ECO:0000314"/>
    <property type="project" value="UniProtKB"/>
</dbReference>
<dbReference type="GO" id="GO:0099507">
    <property type="term" value="F:ligand-gated monoatomic ion channel activity involved in regulation of presynaptic membrane potential"/>
    <property type="evidence" value="ECO:0007669"/>
    <property type="project" value="Ensembl"/>
</dbReference>
<dbReference type="GO" id="GO:1904315">
    <property type="term" value="F:transmitter-gated monoatomic ion channel activity involved in regulation of postsynaptic membrane potential"/>
    <property type="evidence" value="ECO:0000318"/>
    <property type="project" value="GO_Central"/>
</dbReference>
<dbReference type="GO" id="GO:0007216">
    <property type="term" value="P:G protein-coupled glutamate receptor signaling pathway"/>
    <property type="evidence" value="ECO:0000314"/>
    <property type="project" value="UniProtKB"/>
</dbReference>
<dbReference type="GO" id="GO:0007215">
    <property type="term" value="P:glutamate receptor signaling pathway"/>
    <property type="evidence" value="ECO:0000314"/>
    <property type="project" value="UniProtKB"/>
</dbReference>
<dbReference type="GO" id="GO:0050804">
    <property type="term" value="P:modulation of chemical synaptic transmission"/>
    <property type="evidence" value="ECO:0000318"/>
    <property type="project" value="GO_Central"/>
</dbReference>
<dbReference type="GO" id="GO:0051967">
    <property type="term" value="P:negative regulation of synaptic transmission, glutamatergic"/>
    <property type="evidence" value="ECO:0000250"/>
    <property type="project" value="UniProtKB"/>
</dbReference>
<dbReference type="GO" id="GO:0042391">
    <property type="term" value="P:regulation of membrane potential"/>
    <property type="evidence" value="ECO:0000314"/>
    <property type="project" value="MGI"/>
</dbReference>
<dbReference type="GO" id="GO:0035249">
    <property type="term" value="P:synaptic transmission, glutamatergic"/>
    <property type="evidence" value="ECO:0000318"/>
    <property type="project" value="GO_Central"/>
</dbReference>
<dbReference type="CDD" id="cd06382">
    <property type="entry name" value="PBP1_iGluR_Kainate"/>
    <property type="match status" value="1"/>
</dbReference>
<dbReference type="CDD" id="cd13723">
    <property type="entry name" value="PBP2_iGluR_Kainate_GluR7"/>
    <property type="match status" value="1"/>
</dbReference>
<dbReference type="FunFam" id="3.40.50.2300:FF:000010">
    <property type="entry name" value="Glutamate ionotropic receptor kainate type subunit 1"/>
    <property type="match status" value="1"/>
</dbReference>
<dbReference type="FunFam" id="3.40.190.10:FF:000210">
    <property type="entry name" value="Glutamate receptor ionotropic, kainate 1"/>
    <property type="match status" value="1"/>
</dbReference>
<dbReference type="FunFam" id="3.40.190.10:FF:000240">
    <property type="entry name" value="Glutamate receptor ionotropic, kainate 2"/>
    <property type="match status" value="1"/>
</dbReference>
<dbReference type="FunFam" id="1.10.287.70:FF:000010">
    <property type="entry name" value="Putative glutamate receptor ionotropic kainate 1"/>
    <property type="match status" value="1"/>
</dbReference>
<dbReference type="Gene3D" id="1.10.287.70">
    <property type="match status" value="1"/>
</dbReference>
<dbReference type="Gene3D" id="3.40.50.2300">
    <property type="match status" value="2"/>
</dbReference>
<dbReference type="Gene3D" id="3.40.190.10">
    <property type="entry name" value="Periplasmic binding protein-like II"/>
    <property type="match status" value="1"/>
</dbReference>
<dbReference type="InterPro" id="IPR001828">
    <property type="entry name" value="ANF_lig-bd_rcpt"/>
</dbReference>
<dbReference type="InterPro" id="IPR019594">
    <property type="entry name" value="Glu/Gly-bd"/>
</dbReference>
<dbReference type="InterPro" id="IPR001508">
    <property type="entry name" value="Iono_Glu_rcpt_met"/>
</dbReference>
<dbReference type="InterPro" id="IPR015683">
    <property type="entry name" value="Ionotropic_Glu_rcpt"/>
</dbReference>
<dbReference type="InterPro" id="IPR001320">
    <property type="entry name" value="Iontro_rcpt_C"/>
</dbReference>
<dbReference type="InterPro" id="IPR028082">
    <property type="entry name" value="Peripla_BP_I"/>
</dbReference>
<dbReference type="PANTHER" id="PTHR18966">
    <property type="entry name" value="IONOTROPIC GLUTAMATE RECEPTOR"/>
    <property type="match status" value="1"/>
</dbReference>
<dbReference type="Pfam" id="PF01094">
    <property type="entry name" value="ANF_receptor"/>
    <property type="match status" value="1"/>
</dbReference>
<dbReference type="Pfam" id="PF00060">
    <property type="entry name" value="Lig_chan"/>
    <property type="match status" value="1"/>
</dbReference>
<dbReference type="Pfam" id="PF10613">
    <property type="entry name" value="Lig_chan-Glu_bd"/>
    <property type="match status" value="1"/>
</dbReference>
<dbReference type="PRINTS" id="PR00177">
    <property type="entry name" value="NMDARECEPTOR"/>
</dbReference>
<dbReference type="SMART" id="SM00918">
    <property type="entry name" value="Lig_chan-Glu_bd"/>
    <property type="match status" value="1"/>
</dbReference>
<dbReference type="SMART" id="SM00079">
    <property type="entry name" value="PBPe"/>
    <property type="match status" value="1"/>
</dbReference>
<dbReference type="SUPFAM" id="SSF53822">
    <property type="entry name" value="Periplasmic binding protein-like I"/>
    <property type="match status" value="1"/>
</dbReference>
<dbReference type="SUPFAM" id="SSF53850">
    <property type="entry name" value="Periplasmic binding protein-like II"/>
    <property type="match status" value="1"/>
</dbReference>
<proteinExistence type="evidence at protein level"/>
<reference key="1">
    <citation type="journal article" date="1994" name="Recept. Channels">
        <title>Molecular characterization of the human EAA5 (GluR7) receptor: a high-affinity kainate receptor with novel potential RNA editing sites.</title>
        <authorList>
            <person name="Nutt S.L."/>
            <person name="Hoo K.H."/>
            <person name="Rampersad V."/>
            <person name="Deverill R.M."/>
            <person name="Elliott C.E."/>
            <person name="Fletcher E.J."/>
            <person name="Adams S.-L."/>
            <person name="Korczak B."/>
            <person name="Foldes R.L."/>
            <person name="Kamboj R.K."/>
        </authorList>
    </citation>
    <scope>NUCLEOTIDE SEQUENCE [GENOMIC DNA / MRNA] (ISOFORM 1)</scope>
    <scope>VARIANT ALA-310</scope>
    <scope>RNA EDITING OF POSITION 352</scope>
    <scope>FUNCTION</scope>
    <source>
        <tissue>Fetal brain</tissue>
    </source>
</reference>
<reference key="2">
    <citation type="submission" date="1999-09" db="EMBL/GenBank/DDBJ databases">
        <title>Myeloid progenitor cell growth and apoptosis involves known and cell-specific ionotropic glutamate receptors.</title>
        <authorList>
            <person name="Langer A."/>
            <person name="Xu D."/>
            <person name="Kuehcke K."/>
            <person name="Fehse B."/>
            <person name="Abdallah S."/>
            <person name="Lother H."/>
        </authorList>
    </citation>
    <scope>NUCLEOTIDE SEQUENCE [MRNA] (ISOFORM 2)</scope>
    <source>
        <tissue>Erythroleukemia</tissue>
    </source>
</reference>
<reference key="3">
    <citation type="journal article" date="2006" name="Nature">
        <title>The DNA sequence and biological annotation of human chromosome 1.</title>
        <authorList>
            <person name="Gregory S.G."/>
            <person name="Barlow K.F."/>
            <person name="McLay K.E."/>
            <person name="Kaul R."/>
            <person name="Swarbreck D."/>
            <person name="Dunham A."/>
            <person name="Scott C.E."/>
            <person name="Howe K.L."/>
            <person name="Woodfine K."/>
            <person name="Spencer C.C.A."/>
            <person name="Jones M.C."/>
            <person name="Gillson C."/>
            <person name="Searle S."/>
            <person name="Zhou Y."/>
            <person name="Kokocinski F."/>
            <person name="McDonald L."/>
            <person name="Evans R."/>
            <person name="Phillips K."/>
            <person name="Atkinson A."/>
            <person name="Cooper R."/>
            <person name="Jones C."/>
            <person name="Hall R.E."/>
            <person name="Andrews T.D."/>
            <person name="Lloyd C."/>
            <person name="Ainscough R."/>
            <person name="Almeida J.P."/>
            <person name="Ambrose K.D."/>
            <person name="Anderson F."/>
            <person name="Andrew R.W."/>
            <person name="Ashwell R.I.S."/>
            <person name="Aubin K."/>
            <person name="Babbage A.K."/>
            <person name="Bagguley C.L."/>
            <person name="Bailey J."/>
            <person name="Beasley H."/>
            <person name="Bethel G."/>
            <person name="Bird C.P."/>
            <person name="Bray-Allen S."/>
            <person name="Brown J.Y."/>
            <person name="Brown A.J."/>
            <person name="Buckley D."/>
            <person name="Burton J."/>
            <person name="Bye J."/>
            <person name="Carder C."/>
            <person name="Chapman J.C."/>
            <person name="Clark S.Y."/>
            <person name="Clarke G."/>
            <person name="Clee C."/>
            <person name="Cobley V."/>
            <person name="Collier R.E."/>
            <person name="Corby N."/>
            <person name="Coville G.J."/>
            <person name="Davies J."/>
            <person name="Deadman R."/>
            <person name="Dunn M."/>
            <person name="Earthrowl M."/>
            <person name="Ellington A.G."/>
            <person name="Errington H."/>
            <person name="Frankish A."/>
            <person name="Frankland J."/>
            <person name="French L."/>
            <person name="Garner P."/>
            <person name="Garnett J."/>
            <person name="Gay L."/>
            <person name="Ghori M.R.J."/>
            <person name="Gibson R."/>
            <person name="Gilby L.M."/>
            <person name="Gillett W."/>
            <person name="Glithero R.J."/>
            <person name="Grafham D.V."/>
            <person name="Griffiths C."/>
            <person name="Griffiths-Jones S."/>
            <person name="Grocock R."/>
            <person name="Hammond S."/>
            <person name="Harrison E.S.I."/>
            <person name="Hart E."/>
            <person name="Haugen E."/>
            <person name="Heath P.D."/>
            <person name="Holmes S."/>
            <person name="Holt K."/>
            <person name="Howden P.J."/>
            <person name="Hunt A.R."/>
            <person name="Hunt S.E."/>
            <person name="Hunter G."/>
            <person name="Isherwood J."/>
            <person name="James R."/>
            <person name="Johnson C."/>
            <person name="Johnson D."/>
            <person name="Joy A."/>
            <person name="Kay M."/>
            <person name="Kershaw J.K."/>
            <person name="Kibukawa M."/>
            <person name="Kimberley A.M."/>
            <person name="King A."/>
            <person name="Knights A.J."/>
            <person name="Lad H."/>
            <person name="Laird G."/>
            <person name="Lawlor S."/>
            <person name="Leongamornlert D.A."/>
            <person name="Lloyd D.M."/>
            <person name="Loveland J."/>
            <person name="Lovell J."/>
            <person name="Lush M.J."/>
            <person name="Lyne R."/>
            <person name="Martin S."/>
            <person name="Mashreghi-Mohammadi M."/>
            <person name="Matthews L."/>
            <person name="Matthews N.S.W."/>
            <person name="McLaren S."/>
            <person name="Milne S."/>
            <person name="Mistry S."/>
            <person name="Moore M.J.F."/>
            <person name="Nickerson T."/>
            <person name="O'Dell C.N."/>
            <person name="Oliver K."/>
            <person name="Palmeiri A."/>
            <person name="Palmer S.A."/>
            <person name="Parker A."/>
            <person name="Patel D."/>
            <person name="Pearce A.V."/>
            <person name="Peck A.I."/>
            <person name="Pelan S."/>
            <person name="Phelps K."/>
            <person name="Phillimore B.J."/>
            <person name="Plumb R."/>
            <person name="Rajan J."/>
            <person name="Raymond C."/>
            <person name="Rouse G."/>
            <person name="Saenphimmachak C."/>
            <person name="Sehra H.K."/>
            <person name="Sheridan E."/>
            <person name="Shownkeen R."/>
            <person name="Sims S."/>
            <person name="Skuce C.D."/>
            <person name="Smith M."/>
            <person name="Steward C."/>
            <person name="Subramanian S."/>
            <person name="Sycamore N."/>
            <person name="Tracey A."/>
            <person name="Tromans A."/>
            <person name="Van Helmond Z."/>
            <person name="Wall M."/>
            <person name="Wallis J.M."/>
            <person name="White S."/>
            <person name="Whitehead S.L."/>
            <person name="Wilkinson J.E."/>
            <person name="Willey D.L."/>
            <person name="Williams H."/>
            <person name="Wilming L."/>
            <person name="Wray P.W."/>
            <person name="Wu Z."/>
            <person name="Coulson A."/>
            <person name="Vaudin M."/>
            <person name="Sulston J.E."/>
            <person name="Durbin R.M."/>
            <person name="Hubbard T."/>
            <person name="Wooster R."/>
            <person name="Dunham I."/>
            <person name="Carter N.P."/>
            <person name="McVean G."/>
            <person name="Ross M.T."/>
            <person name="Harrow J."/>
            <person name="Olson M.V."/>
            <person name="Beck S."/>
            <person name="Rogers J."/>
            <person name="Bentley D.R."/>
        </authorList>
    </citation>
    <scope>NUCLEOTIDE SEQUENCE [LARGE SCALE GENOMIC DNA]</scope>
</reference>
<reference key="4">
    <citation type="submission" date="2005-09" db="EMBL/GenBank/DDBJ databases">
        <authorList>
            <person name="Mural R.J."/>
            <person name="Istrail S."/>
            <person name="Sutton G.G."/>
            <person name="Florea L."/>
            <person name="Halpern A.L."/>
            <person name="Mobarry C.M."/>
            <person name="Lippert R."/>
            <person name="Walenz B."/>
            <person name="Shatkay H."/>
            <person name="Dew I."/>
            <person name="Miller J.R."/>
            <person name="Flanigan M.J."/>
            <person name="Edwards N.J."/>
            <person name="Bolanos R."/>
            <person name="Fasulo D."/>
            <person name="Halldorsson B.V."/>
            <person name="Hannenhalli S."/>
            <person name="Turner R."/>
            <person name="Yooseph S."/>
            <person name="Lu F."/>
            <person name="Nusskern D.R."/>
            <person name="Shue B.C."/>
            <person name="Zheng X.H."/>
            <person name="Zhong F."/>
            <person name="Delcher A.L."/>
            <person name="Huson D.H."/>
            <person name="Kravitz S.A."/>
            <person name="Mouchard L."/>
            <person name="Reinert K."/>
            <person name="Remington K.A."/>
            <person name="Clark A.G."/>
            <person name="Waterman M.S."/>
            <person name="Eichler E.E."/>
            <person name="Adams M.D."/>
            <person name="Hunkapiller M.W."/>
            <person name="Myers E.W."/>
            <person name="Venter J.C."/>
        </authorList>
    </citation>
    <scope>NUCLEOTIDE SEQUENCE [LARGE SCALE GENOMIC DNA]</scope>
</reference>
<reference key="5">
    <citation type="journal article" date="1993" name="Somat. Cell Mol. Genet.">
        <title>Chromosomal localization of gene for human glutamate receptor subunit-7.</title>
        <authorList>
            <person name="Puranam R.S."/>
            <person name="Eubanks J.H."/>
            <person name="Heinemann S.F."/>
            <person name="McNamara J.O."/>
        </authorList>
    </citation>
    <scope>NUCLEOTIDE SEQUENCE [GENOMIC DNA] OF 268-320</scope>
    <source>
        <tissue>Placenta</tissue>
    </source>
</reference>
<reference key="6">
    <citation type="journal article" date="2000" name="J. Neurosci.">
        <title>Unequal expression of allelic kainate receptor GluR7 mRNAs in human brains.</title>
        <authorList>
            <person name="Schiffer H.H."/>
            <person name="Swanson G.T."/>
            <person name="Masliah E."/>
            <person name="Heinemann S.F."/>
        </authorList>
    </citation>
    <scope>VARIANT ALA-310</scope>
</reference>
<reference key="7">
    <citation type="journal article" date="2006" name="Science">
        <title>The consensus coding sequences of human breast and colorectal cancers.</title>
        <authorList>
            <person name="Sjoeblom T."/>
            <person name="Jones S."/>
            <person name="Wood L.D."/>
            <person name="Parsons D.W."/>
            <person name="Lin J."/>
            <person name="Barber T.D."/>
            <person name="Mandelker D."/>
            <person name="Leary R.J."/>
            <person name="Ptak J."/>
            <person name="Silliman N."/>
            <person name="Szabo S."/>
            <person name="Buckhaults P."/>
            <person name="Farrell C."/>
            <person name="Meeh P."/>
            <person name="Markowitz S.D."/>
            <person name="Willis J."/>
            <person name="Dawson D."/>
            <person name="Willson J.K.V."/>
            <person name="Gazdar A.F."/>
            <person name="Hartigan J."/>
            <person name="Wu L."/>
            <person name="Liu C."/>
            <person name="Parmigiani G."/>
            <person name="Park B.H."/>
            <person name="Bachman K.E."/>
            <person name="Papadopoulos N."/>
            <person name="Vogelstein B."/>
            <person name="Kinzler K.W."/>
            <person name="Velculescu V.E."/>
        </authorList>
    </citation>
    <scope>VARIANTS [LARGE SCALE ANALYSIS] HIS-215 AND HIS-391</scope>
</reference>